<comment type="function">
    <text evidence="1">Has a role in transcriptional regulation. Acts in parallel with the Ras/MAPK and the PI3K/PKB pathways in the control of cell identity and cellular growth. Essential for regulation of the cytoskeleton and cell growth but not for cell proliferation or growth rate. Required specifically for the microtubule-based basal transport of lipid droplets. Plays a partially redundant function downstream of Raf in cell fate specification in the developing eye. Pair-rule protein that regulates embryonic cellularization, gastrulation and segmentation (By similarity).</text>
</comment>
<comment type="subcellular location">
    <subcellularLocation>
        <location evidence="1">Nucleus</location>
    </subcellularLocation>
</comment>
<comment type="similarity">
    <text evidence="2">Belongs to the AF4 family.</text>
</comment>
<protein>
    <recommendedName>
        <fullName evidence="1">AF4/FMR2 family member lilli</fullName>
    </recommendedName>
    <alternativeName>
        <fullName evidence="1">Protein lilliputian</fullName>
    </alternativeName>
</protein>
<name>AFFL_DROWI</name>
<gene>
    <name evidence="1" type="primary">lilli</name>
    <name type="ORF">GK14864</name>
</gene>
<reference evidence="4" key="1">
    <citation type="journal article" date="2007" name="Nature">
        <title>Evolution of genes and genomes on the Drosophila phylogeny.</title>
        <authorList>
            <consortium name="Drosophila 12 genomes consortium"/>
        </authorList>
    </citation>
    <scope>NUCLEOTIDE SEQUENCE [LARGE SCALE GENOMIC DNA]</scope>
    <source>
        <strain evidence="4">Tucson 14030-0811.24</strain>
    </source>
</reference>
<proteinExistence type="inferred from homology"/>
<sequence>MAQQQQQQQHHHHLQHQQQQQQQQQLQHHSNLLLLQQQQQQQQQQQQQQQQLLQQEQQLQQYDNNLYSQNYNMEEYERRRRREREKYERQQGIQSDDRETSLFSEPRRLTEGDAEITAALGEFGDARNYINQYTVGISRHAPGGGSGNGSIGNNPRLQAPMIQQQVSSSISSSASVASSLLPPGLGQTQQQQQQQQQQQQPRPPTYLKQADNKPPYNGRGGYPGQPMKNDIPSSSGMAPPRGPPKLNSNSSSITNNAAASSSSSLLGPPISTQVPNGREKSFLGPPTTGTALHNGGGRFAQPVSNKRPGVGIQPPPPQEKDVRSMLSEMKNHFQVTPLNPIAATPQAPTRENYNLNAPNKFKYAFDIVDPIMPLLNSPPSVTPSSLITPIAPMTSPIAPLLTTPPQASQLPLGSGSGNGAAISATSLSTTTAAAAAAAAVAGVAATVAATVAPIQQLPPTPPKAMSVTPPTAKPLKIEKNPILEKQDSCLENDLELSESEDERKKDGRSPGSSSNGSESDSTESGSESSSKGEHNHHHHHQQQQQQTQQQQLHGHHPQSHHHQQFLQQQLQRQQQQQQQQQQLTANGGKKKYSQTIIASGANTITGLLTSSGGLGSSSGNNSSGGGGGSGNGGTTSSSSGGSMGGSGGSSSSGGASGGGGGGGGSGSSSGIGSGSSSNKTPSPTDSNKWNLSRFFHKPTSQTSSESVSPGNVSMKVPGILPGGAQIIPESIDVTTAIVKNEKIHHDDHLMDIDECDEDDDDVDEQHQQLRYGAGLSVTPVAVKKEEDLGLLTAAAIPKSQIKRESETQISHQRLSESATSGSSSSSCSSSDSAASASEVVPMPGPGETLQIPGVPAAITSVMRVPPINNMQKSQSMSVTVTPIAPLPASPKPRQKKPRKKKMMSVLTPPLLDSSDEDEPSTKHSSLVVAQAQAAVVPPPSTNSTTTSATTTKKGRGRPRKQQQQQSAGSGNLSSASAGSSSQAKGPTLTAAKKTLVKASASSSTSNTNSSSVLPRKREHSSQSSSNGNTPTKKMSSIPMMPAAAASAAATLLQPPAVAAANAVAASSSSSDEESSSSSCSTSKSSSSSSSSDDTETQKTNCRIVKLNKTVPVTAAMAPLAKRSSYHRRSGSSSPTSSSSETDKPNSNSHNNLGIAAISNSNSNSNNNVIVNNNLQQQAMPQQSPYKVPLSGGSQQLSSSDSSSSSSGSSSSSGDEDDAKREKNRERKPKSDKNKISTLTRIFNNKEGGAKKQGQVVIIDQSEEQLQQQQQQQQQVQIRDPLPPPSLLSQSGGVKQRMTPTQQQQLGAGLASPARTTTPLLTSLICKIDLSKLSRERILRLKKLAPSSSNQQNGHLTPNGHVVQGGSSPAGLSKVKHEHHQLHHHSQQAHSHPVKPEPELDSLYETKFRPTNVKQEFQLKQERDRDRNRERDQQQQPPPRRRKRSSSSSSSPYKEKKRKKEKTDPMLTNAKDQMLQINPMLLPSNNHERLSYDKYQLLQEDAAAAAAAAAAVAVVNSSNGQKLFQSSIGGGTGATAVGPLSIMAPSTCSEAVQTTPPTSVTGAGAPASLVSQPPPPPRLIYRSYFDREEEHPSDDLRKSKQFLQEAVQRKHAADSERDSFNQVTLYLEAVAYFLLTADAMERCSSETATWTMYKDTLSLIKFISSKFRPYQQSANCQQETHNKVAILSLRCQSLISLKLFKLRRVNCRAIINSLTDFFRNGRGDIVNGNTPSSISPSNSVGSQGSGSNTPPGKIVPQDIHNQLCKQNEYLTYVNSAHELWDQADRLVRTGNHLDFFRELDHENGPLTLHSTMHEVFRYVQAGLKTLRDAVSHPTHQSQ</sequence>
<keyword id="KW-0217">Developmental protein</keyword>
<keyword id="KW-0238">DNA-binding</keyword>
<keyword id="KW-0539">Nucleus</keyword>
<keyword id="KW-0562">Pair-rule protein</keyword>
<keyword id="KW-0597">Phosphoprotein</keyword>
<keyword id="KW-1185">Reference proteome</keyword>
<keyword id="KW-0804">Transcription</keyword>
<keyword id="KW-0805">Transcription regulation</keyword>
<feature type="chain" id="PRO_0000394679" description="AF4/FMR2 family member lilli">
    <location>
        <begin position="1"/>
        <end position="1837"/>
    </location>
</feature>
<feature type="DNA-binding region" description="A.T hook" evidence="2">
    <location>
        <begin position="952"/>
        <end position="964"/>
    </location>
</feature>
<feature type="region of interest" description="Disordered" evidence="3">
    <location>
        <begin position="1"/>
        <end position="25"/>
    </location>
</feature>
<feature type="region of interest" description="Disordered" evidence="3">
    <location>
        <begin position="65"/>
        <end position="109"/>
    </location>
</feature>
<feature type="region of interest" description="Disordered" evidence="3">
    <location>
        <begin position="162"/>
        <end position="295"/>
    </location>
</feature>
<feature type="region of interest" description="Disordered" evidence="3">
    <location>
        <begin position="455"/>
        <end position="592"/>
    </location>
</feature>
<feature type="region of interest" description="Disordered" evidence="3">
    <location>
        <begin position="605"/>
        <end position="712"/>
    </location>
</feature>
<feature type="region of interest" description="Disordered" evidence="3">
    <location>
        <begin position="797"/>
        <end position="852"/>
    </location>
</feature>
<feature type="region of interest" description="Disordered" evidence="3">
    <location>
        <begin position="868"/>
        <end position="1250"/>
    </location>
</feature>
<feature type="region of interest" description="Disordered" evidence="3">
    <location>
        <begin position="1267"/>
        <end position="1311"/>
    </location>
</feature>
<feature type="region of interest" description="Disordered" evidence="3">
    <location>
        <begin position="1344"/>
        <end position="1466"/>
    </location>
</feature>
<feature type="region of interest" description="Disordered" evidence="3">
    <location>
        <begin position="1550"/>
        <end position="1571"/>
    </location>
</feature>
<feature type="region of interest" description="Disordered" evidence="3">
    <location>
        <begin position="1727"/>
        <end position="1756"/>
    </location>
</feature>
<feature type="compositionally biased region" description="Low complexity" evidence="3">
    <location>
        <begin position="16"/>
        <end position="25"/>
    </location>
</feature>
<feature type="compositionally biased region" description="Basic and acidic residues" evidence="3">
    <location>
        <begin position="84"/>
        <end position="109"/>
    </location>
</feature>
<feature type="compositionally biased region" description="Low complexity" evidence="3">
    <location>
        <begin position="162"/>
        <end position="179"/>
    </location>
</feature>
<feature type="compositionally biased region" description="Low complexity" evidence="3">
    <location>
        <begin position="187"/>
        <end position="200"/>
    </location>
</feature>
<feature type="compositionally biased region" description="Low complexity" evidence="3">
    <location>
        <begin position="247"/>
        <end position="264"/>
    </location>
</feature>
<feature type="compositionally biased region" description="Basic and acidic residues" evidence="3">
    <location>
        <begin position="475"/>
        <end position="488"/>
    </location>
</feature>
<feature type="compositionally biased region" description="Acidic residues" evidence="3">
    <location>
        <begin position="490"/>
        <end position="500"/>
    </location>
</feature>
<feature type="compositionally biased region" description="Low complexity" evidence="3">
    <location>
        <begin position="509"/>
        <end position="529"/>
    </location>
</feature>
<feature type="compositionally biased region" description="Low complexity" evidence="3">
    <location>
        <begin position="542"/>
        <end position="552"/>
    </location>
</feature>
<feature type="compositionally biased region" description="Basic residues" evidence="3">
    <location>
        <begin position="553"/>
        <end position="563"/>
    </location>
</feature>
<feature type="compositionally biased region" description="Low complexity" evidence="3">
    <location>
        <begin position="564"/>
        <end position="583"/>
    </location>
</feature>
<feature type="compositionally biased region" description="Gly residues" evidence="3">
    <location>
        <begin position="612"/>
        <end position="633"/>
    </location>
</feature>
<feature type="compositionally biased region" description="Gly residues" evidence="3">
    <location>
        <begin position="641"/>
        <end position="673"/>
    </location>
</feature>
<feature type="compositionally biased region" description="Polar residues" evidence="3">
    <location>
        <begin position="678"/>
        <end position="690"/>
    </location>
</feature>
<feature type="compositionally biased region" description="Polar residues" evidence="3">
    <location>
        <begin position="698"/>
        <end position="711"/>
    </location>
</feature>
<feature type="compositionally biased region" description="Low complexity" evidence="3">
    <location>
        <begin position="815"/>
        <end position="837"/>
    </location>
</feature>
<feature type="compositionally biased region" description="Polar residues" evidence="3">
    <location>
        <begin position="868"/>
        <end position="880"/>
    </location>
</feature>
<feature type="compositionally biased region" description="Basic residues" evidence="3">
    <location>
        <begin position="892"/>
        <end position="902"/>
    </location>
</feature>
<feature type="compositionally biased region" description="Low complexity" evidence="3">
    <location>
        <begin position="927"/>
        <end position="951"/>
    </location>
</feature>
<feature type="compositionally biased region" description="Low complexity" evidence="3">
    <location>
        <begin position="961"/>
        <end position="1013"/>
    </location>
</feature>
<feature type="compositionally biased region" description="Polar residues" evidence="3">
    <location>
        <begin position="1021"/>
        <end position="1033"/>
    </location>
</feature>
<feature type="compositionally biased region" description="Low complexity" evidence="3">
    <location>
        <begin position="1034"/>
        <end position="1049"/>
    </location>
</feature>
<feature type="compositionally biased region" description="Low complexity" evidence="3">
    <location>
        <begin position="1056"/>
        <end position="1091"/>
    </location>
</feature>
<feature type="compositionally biased region" description="Low complexity" evidence="3">
    <location>
        <begin position="1130"/>
        <end position="1139"/>
    </location>
</feature>
<feature type="compositionally biased region" description="Low complexity" evidence="3">
    <location>
        <begin position="1157"/>
        <end position="1173"/>
    </location>
</feature>
<feature type="compositionally biased region" description="Polar residues" evidence="3">
    <location>
        <begin position="1174"/>
        <end position="1184"/>
    </location>
</feature>
<feature type="compositionally biased region" description="Low complexity" evidence="3">
    <location>
        <begin position="1189"/>
        <end position="1212"/>
    </location>
</feature>
<feature type="compositionally biased region" description="Basic and acidic residues" evidence="3">
    <location>
        <begin position="1217"/>
        <end position="1234"/>
    </location>
</feature>
<feature type="compositionally biased region" description="Low complexity" evidence="3">
    <location>
        <begin position="1267"/>
        <end position="1276"/>
    </location>
</feature>
<feature type="compositionally biased region" description="Polar residues" evidence="3">
    <location>
        <begin position="1345"/>
        <end position="1355"/>
    </location>
</feature>
<feature type="compositionally biased region" description="Basic residues" evidence="3">
    <location>
        <begin position="1373"/>
        <end position="1386"/>
    </location>
</feature>
<feature type="compositionally biased region" description="Basic and acidic residues" evidence="3">
    <location>
        <begin position="1393"/>
        <end position="1407"/>
    </location>
</feature>
<feature type="compositionally biased region" description="Basic and acidic residues" evidence="3">
    <location>
        <begin position="1416"/>
        <end position="1432"/>
    </location>
</feature>
<feature type="compositionally biased region" description="Polar residues" evidence="3">
    <location>
        <begin position="1550"/>
        <end position="1560"/>
    </location>
</feature>
<feature type="compositionally biased region" description="Low complexity" evidence="3">
    <location>
        <begin position="1727"/>
        <end position="1747"/>
    </location>
</feature>
<feature type="modified residue" description="Phosphothreonine" evidence="1">
    <location>
        <position position="468"/>
    </location>
</feature>
<feature type="modified residue" description="Phosphoserine" evidence="1">
    <location>
        <position position="497"/>
    </location>
</feature>
<feature type="modified residue" description="Phosphoserine" evidence="1">
    <location>
        <position position="499"/>
    </location>
</feature>
<feature type="modified residue" description="Phosphoserine" evidence="1">
    <location>
        <position position="913"/>
    </location>
</feature>
<feature type="modified residue" description="Phosphoserine" evidence="1">
    <location>
        <position position="914"/>
    </location>
</feature>
<feature type="modified residue" description="Phosphoserine" evidence="1">
    <location>
        <position position="974"/>
    </location>
</feature>
<feature type="modified residue" description="Phosphoserine" evidence="1">
    <location>
        <position position="976"/>
    </location>
</feature>
<feature type="modified residue" description="Phosphoserine" evidence="1">
    <location>
        <position position="1517"/>
    </location>
</feature>
<evidence type="ECO:0000250" key="1">
    <source>
        <dbReference type="UniProtKB" id="Q9VQI9"/>
    </source>
</evidence>
<evidence type="ECO:0000255" key="2"/>
<evidence type="ECO:0000256" key="3">
    <source>
        <dbReference type="SAM" id="MobiDB-lite"/>
    </source>
</evidence>
<evidence type="ECO:0000312" key="4">
    <source>
        <dbReference type="EMBL" id="EDW76067.1"/>
    </source>
</evidence>
<accession>B4MUE1</accession>
<organism>
    <name type="scientific">Drosophila willistoni</name>
    <name type="common">Fruit fly</name>
    <dbReference type="NCBI Taxonomy" id="7260"/>
    <lineage>
        <taxon>Eukaryota</taxon>
        <taxon>Metazoa</taxon>
        <taxon>Ecdysozoa</taxon>
        <taxon>Arthropoda</taxon>
        <taxon>Hexapoda</taxon>
        <taxon>Insecta</taxon>
        <taxon>Pterygota</taxon>
        <taxon>Neoptera</taxon>
        <taxon>Endopterygota</taxon>
        <taxon>Diptera</taxon>
        <taxon>Brachycera</taxon>
        <taxon>Muscomorpha</taxon>
        <taxon>Ephydroidea</taxon>
        <taxon>Drosophilidae</taxon>
        <taxon>Drosophila</taxon>
        <taxon>Sophophora</taxon>
    </lineage>
</organism>
<dbReference type="EMBL" id="CH963857">
    <property type="protein sequence ID" value="EDW76067.1"/>
    <property type="molecule type" value="Genomic_DNA"/>
</dbReference>
<dbReference type="RefSeq" id="XP_002065081.2">
    <property type="nucleotide sequence ID" value="XM_002065045.2"/>
</dbReference>
<dbReference type="SMR" id="B4MUE1"/>
<dbReference type="STRING" id="7260.B4MUE1"/>
<dbReference type="EnsemblMetazoa" id="XM_023176036.2">
    <property type="protein sequence ID" value="XP_023031804.1"/>
    <property type="gene ID" value="LOC6642171"/>
</dbReference>
<dbReference type="eggNOG" id="ENOG502QR32">
    <property type="taxonomic scope" value="Eukaryota"/>
</dbReference>
<dbReference type="HOGENOM" id="CLU_241798_0_0_1"/>
<dbReference type="OMA" id="NMEATWT"/>
<dbReference type="OrthoDB" id="6382204at2759"/>
<dbReference type="PhylomeDB" id="B4MUE1"/>
<dbReference type="ChiTaRS" id="lilli">
    <property type="organism name" value="fly"/>
</dbReference>
<dbReference type="Proteomes" id="UP000007798">
    <property type="component" value="Unassembled WGS sequence"/>
</dbReference>
<dbReference type="GO" id="GO:0005634">
    <property type="term" value="C:nucleus"/>
    <property type="evidence" value="ECO:0000250"/>
    <property type="project" value="UniProtKB"/>
</dbReference>
<dbReference type="GO" id="GO:0032783">
    <property type="term" value="C:super elongation complex"/>
    <property type="evidence" value="ECO:0007669"/>
    <property type="project" value="TreeGrafter"/>
</dbReference>
<dbReference type="GO" id="GO:0003677">
    <property type="term" value="F:DNA binding"/>
    <property type="evidence" value="ECO:0007669"/>
    <property type="project" value="UniProtKB-KW"/>
</dbReference>
<dbReference type="GO" id="GO:0003712">
    <property type="term" value="F:transcription coregulator activity"/>
    <property type="evidence" value="ECO:0000250"/>
    <property type="project" value="UniProtKB"/>
</dbReference>
<dbReference type="GO" id="GO:0007366">
    <property type="term" value="P:periodic partitioning by pair rule gene"/>
    <property type="evidence" value="ECO:0000250"/>
    <property type="project" value="UniProtKB"/>
</dbReference>
<dbReference type="GO" id="GO:0051493">
    <property type="term" value="P:regulation of cytoskeleton organization"/>
    <property type="evidence" value="ECO:0000250"/>
    <property type="project" value="UniProtKB"/>
</dbReference>
<dbReference type="GO" id="GO:0006355">
    <property type="term" value="P:regulation of DNA-templated transcription"/>
    <property type="evidence" value="ECO:0000250"/>
    <property type="project" value="UniProtKB"/>
</dbReference>
<dbReference type="GO" id="GO:0032368">
    <property type="term" value="P:regulation of lipid transport"/>
    <property type="evidence" value="ECO:0000250"/>
    <property type="project" value="UniProtKB"/>
</dbReference>
<dbReference type="InterPro" id="IPR007797">
    <property type="entry name" value="AF4/FMR2"/>
</dbReference>
<dbReference type="InterPro" id="IPR043640">
    <property type="entry name" value="AF4/FMR2_CHD"/>
</dbReference>
<dbReference type="InterPro" id="IPR000637">
    <property type="entry name" value="HMGI/Y_DNA-bd_CS"/>
</dbReference>
<dbReference type="PANTHER" id="PTHR10528">
    <property type="entry name" value="AF4/FMR2 FAMILY MEMBER"/>
    <property type="match status" value="1"/>
</dbReference>
<dbReference type="PANTHER" id="PTHR10528:SF17">
    <property type="entry name" value="AF4_FMR2 FAMILY MEMBER LILLI"/>
    <property type="match status" value="1"/>
</dbReference>
<dbReference type="Pfam" id="PF18876">
    <property type="entry name" value="AFF4_CHD"/>
    <property type="match status" value="1"/>
</dbReference>
<dbReference type="PROSITE" id="PS00354">
    <property type="entry name" value="HMGI_Y"/>
    <property type="match status" value="1"/>
</dbReference>